<organism>
    <name type="scientific">Oryctolagus cuniculus</name>
    <name type="common">Rabbit</name>
    <dbReference type="NCBI Taxonomy" id="9986"/>
    <lineage>
        <taxon>Eukaryota</taxon>
        <taxon>Metazoa</taxon>
        <taxon>Chordata</taxon>
        <taxon>Craniata</taxon>
        <taxon>Vertebrata</taxon>
        <taxon>Euteleostomi</taxon>
        <taxon>Mammalia</taxon>
        <taxon>Eutheria</taxon>
        <taxon>Euarchontoglires</taxon>
        <taxon>Glires</taxon>
        <taxon>Lagomorpha</taxon>
        <taxon>Leporidae</taxon>
        <taxon>Oryctolagus</taxon>
    </lineage>
</organism>
<protein>
    <recommendedName>
        <fullName>Rho-associated protein kinase 1</fullName>
        <ecNumber evidence="3">2.7.11.1</ecNumber>
    </recommendedName>
    <alternativeName>
        <fullName>Corneal epithelial Rho-associated-Ser/Thr kinase 1</fullName>
    </alternativeName>
    <alternativeName>
        <fullName>HEBM1</fullName>
    </alternativeName>
    <alternativeName>
        <fullName>Rho-associated, coiled-coil-containing protein kinase 1</fullName>
    </alternativeName>
    <alternativeName>
        <fullName>Rho-associated, coiled-coil-containing protein kinase I</fullName>
        <shortName>ROCK-I</shortName>
    </alternativeName>
    <alternativeName>
        <fullName>cAMP-dependent protein kinase ROCK-I</fullName>
        <shortName>CePKA</shortName>
    </alternativeName>
    <alternativeName>
        <fullName>p160 ROCK-1</fullName>
        <shortName>p160ROCK</shortName>
    </alternativeName>
</protein>
<sequence>MSTGDSFETRFEKIDNLLRDPKSEVNSDCLLDGLDALVYDLDFPALRKNKNIDNFLSRYKDTINKIRDLRMKAEDYEVVKVIGRGAFGEVQLVRHKSTRKVYAMKLLSKFEMIKRSDSAFFWEERDIMAFANSPWVVQLFYAFQDDRYLYMVMEYMPGGDLVNLMSNYDVPEKWARFYTAEVVLALDAIHSMGFIHRDVKPDNMLLDKSGHLKLADFGTCMKMNKEGMVRCDTAVGTPDYISPEVLKSQGGDGYYGRECDWWSVGVFLYEMLVGDTPFYADSLVGTYSKIMNHKNSLTFPDDNDISKEAKNLICAFLTDREVRLGRNGVEEIKRHLFFKNDQWAWETLRDTVAPVVPDLSSDIDTSNFDDLEEDKGDEETFPIPKAFVGNQLPFVGFTYYSNRRYLSPANPNDNRTSSNVDKSLQENLQKTIYKLEEQLHNEMQLKDEMEQKCRTSNIKLDKIMKELDEEGNQRRNLESTVSQIEKEKMLLQHRINEYQRKAEQENEKRRNVENEVSTLKDQLEDLKKVSQNSQLANEKLAQLQKQLEEANDLLRTESDTAVRLRKSHTEMSKSISQLESLNRELQERNRILENSKSQTDKDYYQLQAVLEAERRDRGHDSEMIGDLQARITSLQEEVKHLKYNLERMEGERKEAQDMLNHSEKEKNNLEIDLNYKLKSLQQRLEQEVNEHKVTKARLTDKHQSIEEAKSVAMCEMEKKLKEEREAREKAENRVVQIEKQCSMLDVDLKQSQQKLEHLTENKERMEDEVKNLTLQLEQESNKRLLLQNELKTQAFEADNLKGLEKQMKQEINTLLEAKRLLEFELAQLTKQYRGNEGQMRELQDQLEAEQYFSTLYKTQVKELKEEIEEKNRENLKKIQELQNEKETLATQLDLAETKAESEQLARGLLEEQYFELTQESKKAASRNRQEITDKDHAVSRLEETNSILTKDIELLRKENEELTDKMRKSEEEYKLQKEEEISNLKATYEKNINTERTLKTQAVNKLAEIMNRKDFKIDKKKANTQDLRKKEKENRKLQLELNQEREKFNQMVVKHQKELNDMQAQLVEECTHRNELQMQLASKESDIEQLRAKLSDLSDSTSVASFPSADETDPNLPESRIEGWLSVPNRGNIKRYGWKKQYVVVSSKKILFYNDEQDKEQSNPSMVLDIDKLFHVRPVTQGDVYRAETEEIPKIFQILYANEGECRKDVEVEPVQQAEKTNFQNHKGHEFIPTLYHFPANCEACAKPLWHVFKPPPALECRRCHVKCHRDHLDKKEDLISPCKVSYDVTSARDMLLLACSQDEQKKWVTHLVKKIPKNPPSGFVRASPRTLSTRSTANQSFRKVVKNTSGKTS</sequence>
<keyword id="KW-0007">Acetylation</keyword>
<keyword id="KW-0053">Apoptosis</keyword>
<keyword id="KW-0067">ATP-binding</keyword>
<keyword id="KW-1003">Cell membrane</keyword>
<keyword id="KW-0966">Cell projection</keyword>
<keyword id="KW-0175">Coiled coil</keyword>
<keyword id="KW-0963">Cytoplasm</keyword>
<keyword id="KW-0206">Cytoskeleton</keyword>
<keyword id="KW-0333">Golgi apparatus</keyword>
<keyword id="KW-0418">Kinase</keyword>
<keyword id="KW-0460">Magnesium</keyword>
<keyword id="KW-0472">Membrane</keyword>
<keyword id="KW-0479">Metal-binding</keyword>
<keyword id="KW-0547">Nucleotide-binding</keyword>
<keyword id="KW-0597">Phosphoprotein</keyword>
<keyword id="KW-1185">Reference proteome</keyword>
<keyword id="KW-0723">Serine/threonine-protein kinase</keyword>
<keyword id="KW-0808">Transferase</keyword>
<keyword id="KW-0862">Zinc</keyword>
<keyword id="KW-0863">Zinc-finger</keyword>
<gene>
    <name type="primary">ROCK1</name>
</gene>
<accession>O77819</accession>
<evidence type="ECO:0000250" key="1"/>
<evidence type="ECO:0000250" key="2">
    <source>
        <dbReference type="UniProtKB" id="P70335"/>
    </source>
</evidence>
<evidence type="ECO:0000250" key="3">
    <source>
        <dbReference type="UniProtKB" id="Q13464"/>
    </source>
</evidence>
<evidence type="ECO:0000250" key="4">
    <source>
        <dbReference type="UniProtKB" id="Q8MIT6"/>
    </source>
</evidence>
<evidence type="ECO:0000255" key="5"/>
<evidence type="ECO:0000255" key="6">
    <source>
        <dbReference type="PROSITE-ProRule" id="PRU00145"/>
    </source>
</evidence>
<evidence type="ECO:0000255" key="7">
    <source>
        <dbReference type="PROSITE-ProRule" id="PRU00159"/>
    </source>
</evidence>
<evidence type="ECO:0000255" key="8">
    <source>
        <dbReference type="PROSITE-ProRule" id="PRU00226"/>
    </source>
</evidence>
<evidence type="ECO:0000255" key="9">
    <source>
        <dbReference type="PROSITE-ProRule" id="PRU00618"/>
    </source>
</evidence>
<evidence type="ECO:0000255" key="10">
    <source>
        <dbReference type="PROSITE-ProRule" id="PRU01206"/>
    </source>
</evidence>
<evidence type="ECO:0000255" key="11">
    <source>
        <dbReference type="PROSITE-ProRule" id="PRU01207"/>
    </source>
</evidence>
<evidence type="ECO:0000255" key="12">
    <source>
        <dbReference type="PROSITE-ProRule" id="PRU10027"/>
    </source>
</evidence>
<evidence type="ECO:0000256" key="13">
    <source>
        <dbReference type="SAM" id="MobiDB-lite"/>
    </source>
</evidence>
<evidence type="ECO:0000269" key="14">
    <source>
    </source>
</evidence>
<evidence type="ECO:0000269" key="15">
    <source>
    </source>
</evidence>
<evidence type="ECO:0000305" key="16"/>
<proteinExistence type="evidence at protein level"/>
<comment type="function">
    <text evidence="2 3 4 14">Protein kinase which is a key regulator of the actin cytoskeleton and cell polarity (By similarity). Involved in regulation of smooth muscle contraction, actin cytoskeleton organization, stress fiber and focal adhesion formation, neurite retraction, cell adhesion and motility via phosphorylation of DAPK3, GFAP, LIMK1, LIMK2, MYL9/MLC2, TPPP, PFN1 and PPP1R12A (By similarity) (PubMed:9139666). Phosphorylates FHOD1 and acts synergistically with it to promote SRC-dependent non-apoptotic plasma membrane blebbing. Phosphorylates JIP3 and regulates the recruitment of JNK to JIP3 upon UVB-induced stress (By similarity). Acts as a suppressor of inflammatory cell migration by regulating PTEN phosphorylation and stability (By similarity). Acts as a negative regulator of VEGF-induced angiogenic endothelial cell activation. Required for centrosome positioning and centrosome-dependent exit from mitosis (By similarity). Plays a role in terminal erythroid differentiation (By similarity). Inhibits podocyte motility via regulation of actin cytoskeletal dynamics and phosphorylation of CFL1 (By similarity). Promotes keratinocyte terminal differentiation (By similarity). Involved in osteoblast compaction through the fibronectin fibrillogenesis cell-mediated matrix assembly process, essential for osteoblast mineralization (By similarity). May regulate closure of the eyelids and ventral body wall by inducing the assembly of actomyosin bundles (By similarity).</text>
</comment>
<comment type="catalytic activity">
    <reaction evidence="3">
        <text>L-seryl-[protein] + ATP = O-phospho-L-seryl-[protein] + ADP + H(+)</text>
        <dbReference type="Rhea" id="RHEA:17989"/>
        <dbReference type="Rhea" id="RHEA-COMP:9863"/>
        <dbReference type="Rhea" id="RHEA-COMP:11604"/>
        <dbReference type="ChEBI" id="CHEBI:15378"/>
        <dbReference type="ChEBI" id="CHEBI:29999"/>
        <dbReference type="ChEBI" id="CHEBI:30616"/>
        <dbReference type="ChEBI" id="CHEBI:83421"/>
        <dbReference type="ChEBI" id="CHEBI:456216"/>
        <dbReference type="EC" id="2.7.11.1"/>
    </reaction>
    <physiologicalReaction direction="left-to-right" evidence="3">
        <dbReference type="Rhea" id="RHEA:17990"/>
    </physiologicalReaction>
</comment>
<comment type="catalytic activity">
    <reaction evidence="3">
        <text>L-threonyl-[protein] + ATP = O-phospho-L-threonyl-[protein] + ADP + H(+)</text>
        <dbReference type="Rhea" id="RHEA:46608"/>
        <dbReference type="Rhea" id="RHEA-COMP:11060"/>
        <dbReference type="Rhea" id="RHEA-COMP:11605"/>
        <dbReference type="ChEBI" id="CHEBI:15378"/>
        <dbReference type="ChEBI" id="CHEBI:30013"/>
        <dbReference type="ChEBI" id="CHEBI:30616"/>
        <dbReference type="ChEBI" id="CHEBI:61977"/>
        <dbReference type="ChEBI" id="CHEBI:456216"/>
        <dbReference type="EC" id="2.7.11.1"/>
    </reaction>
    <physiologicalReaction direction="left-to-right" evidence="3">
        <dbReference type="Rhea" id="RHEA:46609"/>
    </physiologicalReaction>
</comment>
<comment type="cofactor">
    <cofactor evidence="1">
        <name>Mg(2+)</name>
        <dbReference type="ChEBI" id="CHEBI:18420"/>
    </cofactor>
</comment>
<comment type="activity regulation">
    <text evidence="1">Activated by RHOA binding. Inhibited by Y-27632 (By similarity).</text>
</comment>
<comment type="subunit">
    <text evidence="1 3">Homodimer. Interacts with RHOA (activated by GTP), RHOB, RHOC, GEM, MYLC2B, RHOE, PPP1R12A, LIMK1, LIMK2, TSG101, CHORDC1, DAPK3, PFN1, PTEN and JIP3. Interacts with FHOD1 in a Src-dependent manner. Interacts with ITGB1BP1 (via N-terminus and PTB domain). Interacts with SHROOM3 (By similarity).</text>
</comment>
<comment type="subcellular location">
    <subcellularLocation>
        <location evidence="2">Cytoplasm</location>
    </subcellularLocation>
    <subcellularLocation>
        <location evidence="2">Cytoplasm</location>
        <location evidence="2">Cytoskeleton</location>
        <location evidence="2">Microtubule organizing center</location>
        <location evidence="2">Centrosome</location>
        <location evidence="2">Centriole</location>
    </subcellularLocation>
    <subcellularLocation>
        <location evidence="3">Golgi apparatus membrane</location>
        <topology evidence="3">Peripheral membrane protein</topology>
    </subcellularLocation>
    <subcellularLocation>
        <location evidence="3">Cell projection</location>
        <location evidence="3">Bleb</location>
    </subcellularLocation>
    <subcellularLocation>
        <location evidence="2">Cytoplasm</location>
        <location evidence="2">Cytoskeleton</location>
    </subcellularLocation>
    <subcellularLocation>
        <location evidence="2">Cell membrane</location>
    </subcellularLocation>
    <subcellularLocation>
        <location evidence="2">Cell projection</location>
        <location evidence="2">Lamellipodium</location>
    </subcellularLocation>
    <subcellularLocation>
        <location evidence="2">Cell projection</location>
        <location evidence="2">Ruffle</location>
    </subcellularLocation>
    <text evidence="2 3">A small proportion is associated with Golgi membranes (By similarity). Associated with the mother centriole and an intercentriolar linker (By similarity). Colocalizes with ITGB1BP1 and ITGB1 at the cell membrane predominantly in lamellipodia and membrane ruffles, but also in retraction fibers (By similarity). Localizes at the cell membrane in an ITGB1BP1-dependent manner (By similarity).</text>
</comment>
<comment type="tissue specificity">
    <text evidence="15">Detected in corneal epithelium.</text>
</comment>
<comment type="domain">
    <text>The C-terminal auto-inhibitory domain interferes with kinase activity. RHOA binding leads to a conformation change and activation of the kinase. Truncated ROCK1 is constitutively activated.</text>
</comment>
<comment type="PTM">
    <text>Autophosphorylated on serine and threonine residues.</text>
</comment>
<comment type="PTM">
    <text evidence="1">Cleaved by caspase-3 during apoptosis. This leads to constitutive activation of the kinase and membrane blebbing (By similarity).</text>
</comment>
<comment type="similarity">
    <text evidence="16">Belongs to the protein kinase superfamily. AGC Ser/Thr protein kinase family.</text>
</comment>
<name>ROCK1_RABIT</name>
<reference key="1">
    <citation type="journal article" date="1998" name="Invest. Ophthalmol. Vis. Sci.">
        <title>A Rho-associated protein kinase: differentially distributed in limbal and corneal epithelia.</title>
        <authorList>
            <person name="Sundar-Raj N."/>
            <person name="Kinchington P.R."/>
            <person name="Wessel H."/>
            <person name="Goldblatt B."/>
            <person name="Hassell J."/>
            <person name="Vergnes J.P."/>
            <person name="Anderson S.C."/>
        </authorList>
    </citation>
    <scope>NUCLEOTIDE SEQUENCE [MRNA]</scope>
    <scope>TISSUE SPECIFICITY</scope>
    <source>
        <strain>New Zealand white</strain>
        <tissue>Cornea</tissue>
    </source>
</reference>
<reference key="2">
    <citation type="journal article" date="1997" name="J. Biol. Chem.">
        <title>Rho-associated kinase directly induces smooth muscle contraction through myosin light chain phosphorylation.</title>
        <authorList>
            <person name="Kureishi Y."/>
            <person name="Kobayashi S."/>
            <person name="Amano M."/>
            <person name="Kimura K."/>
            <person name="Kanaide H."/>
            <person name="Nakano T."/>
            <person name="Kaibuchi K."/>
            <person name="Ito M."/>
        </authorList>
    </citation>
    <scope>FUNCTION</scope>
    <scope>INTERACTION WITH MYOSIN LIGHT CHAIN</scope>
</reference>
<feature type="initiator methionine" description="Removed" evidence="3">
    <location>
        <position position="1"/>
    </location>
</feature>
<feature type="chain" id="PRO_0000086622" description="Rho-associated protein kinase 1">
    <location>
        <begin position="2"/>
        <end position="1354"/>
    </location>
</feature>
<feature type="domain" description="Protein kinase" evidence="7">
    <location>
        <begin position="76"/>
        <end position="338"/>
    </location>
</feature>
<feature type="domain" description="AGC-kinase C-terminal" evidence="9">
    <location>
        <begin position="341"/>
        <end position="409"/>
    </location>
</feature>
<feature type="domain" description="REM-1" evidence="11">
    <location>
        <begin position="479"/>
        <end position="556"/>
    </location>
</feature>
<feature type="domain" description="RhoBD" evidence="10">
    <location>
        <begin position="949"/>
        <end position="1015"/>
    </location>
</feature>
<feature type="domain" description="PH" evidence="6">
    <location>
        <begin position="1118"/>
        <end position="1317"/>
    </location>
</feature>
<feature type="zinc finger region" description="Phorbol-ester/DAG-type" evidence="8">
    <location>
        <begin position="1228"/>
        <end position="1283"/>
    </location>
</feature>
<feature type="region of interest" description="Interaction with FHOD1" evidence="1">
    <location>
        <begin position="368"/>
        <end position="727"/>
    </location>
</feature>
<feature type="region of interest" description="SHROOM3 binding" evidence="3">
    <location>
        <begin position="707"/>
        <end position="946"/>
    </location>
</feature>
<feature type="region of interest" description="RHOA binding" evidence="1">
    <location>
        <begin position="998"/>
        <end position="1010"/>
    </location>
</feature>
<feature type="region of interest" description="Disordered" evidence="13">
    <location>
        <begin position="1101"/>
        <end position="1120"/>
    </location>
</feature>
<feature type="region of interest" description="Auto-inhibitory" evidence="1">
    <location>
        <begin position="1115"/>
        <end position="1354"/>
    </location>
</feature>
<feature type="region of interest" description="Disordered" evidence="13">
    <location>
        <begin position="1333"/>
        <end position="1354"/>
    </location>
</feature>
<feature type="coiled-coil region" evidence="5">
    <location>
        <begin position="422"/>
        <end position="692"/>
    </location>
</feature>
<feature type="coiled-coil region" evidence="5">
    <location>
        <begin position="1011"/>
        <end position="1102"/>
    </location>
</feature>
<feature type="active site" description="Proton acceptor" evidence="7 12">
    <location>
        <position position="198"/>
    </location>
</feature>
<feature type="binding site" evidence="7">
    <location>
        <begin position="82"/>
        <end position="90"/>
    </location>
    <ligand>
        <name>ATP</name>
        <dbReference type="ChEBI" id="CHEBI:30616"/>
    </ligand>
</feature>
<feature type="binding site" evidence="7">
    <location>
        <position position="105"/>
    </location>
    <ligand>
        <name>ATP</name>
        <dbReference type="ChEBI" id="CHEBI:30616"/>
    </ligand>
</feature>
<feature type="site" description="Cleavage; by caspase-3" evidence="1">
    <location>
        <begin position="1113"/>
        <end position="1114"/>
    </location>
</feature>
<feature type="modified residue" description="N-acetylserine" evidence="3">
    <location>
        <position position="2"/>
    </location>
</feature>
<feature type="modified residue" description="Phosphoserine" evidence="3">
    <location>
        <position position="1105"/>
    </location>
</feature>
<feature type="modified residue" description="Phosphoserine" evidence="2">
    <location>
        <position position="1108"/>
    </location>
</feature>
<feature type="modified residue" description="Phosphoserine" evidence="3">
    <location>
        <position position="1328"/>
    </location>
</feature>
<dbReference type="EC" id="2.7.11.1" evidence="3"/>
<dbReference type="EMBL" id="U42424">
    <property type="protein sequence ID" value="AAC36189.1"/>
    <property type="molecule type" value="mRNA"/>
</dbReference>
<dbReference type="RefSeq" id="NP_001075836.1">
    <property type="nucleotide sequence ID" value="NM_001082367.1"/>
</dbReference>
<dbReference type="SMR" id="O77819"/>
<dbReference type="FunCoup" id="O77819">
    <property type="interactions" value="1443"/>
</dbReference>
<dbReference type="STRING" id="9986.ENSOCUP00000034408"/>
<dbReference type="PaxDb" id="9986-ENSOCUP00000004197"/>
<dbReference type="GeneID" id="100009220"/>
<dbReference type="KEGG" id="ocu:100009220"/>
<dbReference type="CTD" id="6093"/>
<dbReference type="eggNOG" id="KOG0612">
    <property type="taxonomic scope" value="Eukaryota"/>
</dbReference>
<dbReference type="InParanoid" id="O77819"/>
<dbReference type="OrthoDB" id="3638488at2759"/>
<dbReference type="Proteomes" id="UP000001811">
    <property type="component" value="Unplaced"/>
</dbReference>
<dbReference type="GO" id="GO:0032059">
    <property type="term" value="C:bleb"/>
    <property type="evidence" value="ECO:0007669"/>
    <property type="project" value="UniProtKB-SubCell"/>
</dbReference>
<dbReference type="GO" id="GO:0005814">
    <property type="term" value="C:centriole"/>
    <property type="evidence" value="ECO:0007669"/>
    <property type="project" value="UniProtKB-SubCell"/>
</dbReference>
<dbReference type="GO" id="GO:0010494">
    <property type="term" value="C:cytoplasmic stress granule"/>
    <property type="evidence" value="ECO:0007669"/>
    <property type="project" value="TreeGrafter"/>
</dbReference>
<dbReference type="GO" id="GO:0005856">
    <property type="term" value="C:cytoskeleton"/>
    <property type="evidence" value="ECO:0000250"/>
    <property type="project" value="UniProtKB"/>
</dbReference>
<dbReference type="GO" id="GO:0000139">
    <property type="term" value="C:Golgi membrane"/>
    <property type="evidence" value="ECO:0007669"/>
    <property type="project" value="UniProtKB-SubCell"/>
</dbReference>
<dbReference type="GO" id="GO:0030027">
    <property type="term" value="C:lamellipodium"/>
    <property type="evidence" value="ECO:0000250"/>
    <property type="project" value="UniProtKB"/>
</dbReference>
<dbReference type="GO" id="GO:0005886">
    <property type="term" value="C:plasma membrane"/>
    <property type="evidence" value="ECO:0000250"/>
    <property type="project" value="UniProtKB"/>
</dbReference>
<dbReference type="GO" id="GO:0001726">
    <property type="term" value="C:ruffle"/>
    <property type="evidence" value="ECO:0000250"/>
    <property type="project" value="UniProtKB"/>
</dbReference>
<dbReference type="GO" id="GO:0005524">
    <property type="term" value="F:ATP binding"/>
    <property type="evidence" value="ECO:0007669"/>
    <property type="project" value="UniProtKB-KW"/>
</dbReference>
<dbReference type="GO" id="GO:0106310">
    <property type="term" value="F:protein serine kinase activity"/>
    <property type="evidence" value="ECO:0007669"/>
    <property type="project" value="RHEA"/>
</dbReference>
<dbReference type="GO" id="GO:0004674">
    <property type="term" value="F:protein serine/threonine kinase activity"/>
    <property type="evidence" value="ECO:0000250"/>
    <property type="project" value="UniProtKB"/>
</dbReference>
<dbReference type="GO" id="GO:0072518">
    <property type="term" value="F:Rho-dependent protein serine/threonine kinase activity"/>
    <property type="evidence" value="ECO:0007669"/>
    <property type="project" value="TreeGrafter"/>
</dbReference>
<dbReference type="GO" id="GO:0031267">
    <property type="term" value="F:small GTPase binding"/>
    <property type="evidence" value="ECO:0007669"/>
    <property type="project" value="InterPro"/>
</dbReference>
<dbReference type="GO" id="GO:0008270">
    <property type="term" value="F:zinc ion binding"/>
    <property type="evidence" value="ECO:0007669"/>
    <property type="project" value="UniProtKB-KW"/>
</dbReference>
<dbReference type="GO" id="GO:0031032">
    <property type="term" value="P:actomyosin structure organization"/>
    <property type="evidence" value="ECO:0007669"/>
    <property type="project" value="TreeGrafter"/>
</dbReference>
<dbReference type="GO" id="GO:0006915">
    <property type="term" value="P:apoptotic process"/>
    <property type="evidence" value="ECO:0007669"/>
    <property type="project" value="UniProtKB-KW"/>
</dbReference>
<dbReference type="GO" id="GO:0030866">
    <property type="term" value="P:cortical actin cytoskeleton organization"/>
    <property type="evidence" value="ECO:0007669"/>
    <property type="project" value="TreeGrafter"/>
</dbReference>
<dbReference type="GO" id="GO:0048598">
    <property type="term" value="P:embryonic morphogenesis"/>
    <property type="evidence" value="ECO:0007669"/>
    <property type="project" value="TreeGrafter"/>
</dbReference>
<dbReference type="GO" id="GO:0000281">
    <property type="term" value="P:mitotic cytokinesis"/>
    <property type="evidence" value="ECO:0007669"/>
    <property type="project" value="TreeGrafter"/>
</dbReference>
<dbReference type="GO" id="GO:0051451">
    <property type="term" value="P:myoblast migration"/>
    <property type="evidence" value="ECO:0000250"/>
    <property type="project" value="UniProtKB"/>
</dbReference>
<dbReference type="GO" id="GO:0090521">
    <property type="term" value="P:podocyte cell migration"/>
    <property type="evidence" value="ECO:0000250"/>
    <property type="project" value="UniProtKB"/>
</dbReference>
<dbReference type="GO" id="GO:0051894">
    <property type="term" value="P:positive regulation of focal adhesion assembly"/>
    <property type="evidence" value="ECO:0000250"/>
    <property type="project" value="UniProtKB"/>
</dbReference>
<dbReference type="GO" id="GO:0032956">
    <property type="term" value="P:regulation of actin cytoskeleton organization"/>
    <property type="evidence" value="ECO:0000250"/>
    <property type="project" value="UniProtKB"/>
</dbReference>
<dbReference type="GO" id="GO:0030334">
    <property type="term" value="P:regulation of cell migration"/>
    <property type="evidence" value="ECO:0000250"/>
    <property type="project" value="UniProtKB"/>
</dbReference>
<dbReference type="GO" id="GO:0070507">
    <property type="term" value="P:regulation of microtubule cytoskeleton organization"/>
    <property type="evidence" value="ECO:0000250"/>
    <property type="project" value="UniProtKB"/>
</dbReference>
<dbReference type="GO" id="GO:0007266">
    <property type="term" value="P:Rho protein signal transduction"/>
    <property type="evidence" value="ECO:0007669"/>
    <property type="project" value="InterPro"/>
</dbReference>
<dbReference type="CDD" id="cd20874">
    <property type="entry name" value="C1_ROCK1"/>
    <property type="match status" value="1"/>
</dbReference>
<dbReference type="CDD" id="cd11639">
    <property type="entry name" value="HR1_ROCK1"/>
    <property type="match status" value="1"/>
</dbReference>
<dbReference type="CDD" id="cd01242">
    <property type="entry name" value="PH_ROCK"/>
    <property type="match status" value="1"/>
</dbReference>
<dbReference type="CDD" id="cd22250">
    <property type="entry name" value="ROCK_SBD"/>
    <property type="match status" value="1"/>
</dbReference>
<dbReference type="CDD" id="cd05622">
    <property type="entry name" value="STKc_ROCK1"/>
    <property type="match status" value="1"/>
</dbReference>
<dbReference type="FunFam" id="1.10.510.10:FF:000047">
    <property type="entry name" value="Rho-associated protein kinase 1"/>
    <property type="match status" value="1"/>
</dbReference>
<dbReference type="FunFam" id="1.20.5.340:FF:000023">
    <property type="entry name" value="Rho-associated protein kinase 1"/>
    <property type="match status" value="1"/>
</dbReference>
<dbReference type="FunFam" id="3.30.60.20:FF:000036">
    <property type="entry name" value="Rho-associated protein kinase 1"/>
    <property type="match status" value="1"/>
</dbReference>
<dbReference type="FunFam" id="2.30.29.30:FF:000033">
    <property type="entry name" value="Rho-associated protein kinase 2"/>
    <property type="match status" value="1"/>
</dbReference>
<dbReference type="FunFam" id="3.30.200.20:FF:000072">
    <property type="entry name" value="Rho-associated protein kinase 2"/>
    <property type="match status" value="1"/>
</dbReference>
<dbReference type="FunFam" id="1.20.5.730:FF:000001">
    <property type="entry name" value="rho-associated protein kinase 2"/>
    <property type="match status" value="1"/>
</dbReference>
<dbReference type="FunFam" id="3.30.200.20:FF:001759">
    <property type="entry name" value="Rho-associated, coiled-coil-containing protein kinase 2b"/>
    <property type="match status" value="1"/>
</dbReference>
<dbReference type="Gene3D" id="1.20.5.340">
    <property type="match status" value="1"/>
</dbReference>
<dbReference type="Gene3D" id="3.30.60.20">
    <property type="match status" value="1"/>
</dbReference>
<dbReference type="Gene3D" id="3.30.200.20">
    <property type="entry name" value="Phosphorylase Kinase, domain 1"/>
    <property type="match status" value="1"/>
</dbReference>
<dbReference type="Gene3D" id="2.30.29.30">
    <property type="entry name" value="Pleckstrin-homology domain (PH domain)/Phosphotyrosine-binding domain (PTB)"/>
    <property type="match status" value="1"/>
</dbReference>
<dbReference type="Gene3D" id="1.20.5.730">
    <property type="entry name" value="Single helix bin"/>
    <property type="match status" value="1"/>
</dbReference>
<dbReference type="Gene3D" id="1.10.510.10">
    <property type="entry name" value="Transferase(Phosphotransferase) domain 1"/>
    <property type="match status" value="1"/>
</dbReference>
<dbReference type="InterPro" id="IPR000961">
    <property type="entry name" value="AGC-kinase_C"/>
</dbReference>
<dbReference type="InterPro" id="IPR046349">
    <property type="entry name" value="C1-like_sf"/>
</dbReference>
<dbReference type="InterPro" id="IPR011072">
    <property type="entry name" value="HR1_rho-bd"/>
</dbReference>
<dbReference type="InterPro" id="IPR011009">
    <property type="entry name" value="Kinase-like_dom_sf"/>
</dbReference>
<dbReference type="InterPro" id="IPR002219">
    <property type="entry name" value="PE/DAG-bd"/>
</dbReference>
<dbReference type="InterPro" id="IPR011993">
    <property type="entry name" value="PH-like_dom_sf"/>
</dbReference>
<dbReference type="InterPro" id="IPR001849">
    <property type="entry name" value="PH_domain"/>
</dbReference>
<dbReference type="InterPro" id="IPR000719">
    <property type="entry name" value="Prot_kinase_dom"/>
</dbReference>
<dbReference type="InterPro" id="IPR017441">
    <property type="entry name" value="Protein_kinase_ATP_BS"/>
</dbReference>
<dbReference type="InterPro" id="IPR050839">
    <property type="entry name" value="Rho-assoc_Ser/Thr_Kinase"/>
</dbReference>
<dbReference type="InterPro" id="IPR020684">
    <property type="entry name" value="ROCK1/ROCK2"/>
</dbReference>
<dbReference type="InterPro" id="IPR037310">
    <property type="entry name" value="ROCK1_HR1"/>
</dbReference>
<dbReference type="InterPro" id="IPR015008">
    <property type="entry name" value="ROCK_Rho-bd_dom"/>
</dbReference>
<dbReference type="InterPro" id="IPR008271">
    <property type="entry name" value="Ser/Thr_kinase_AS"/>
</dbReference>
<dbReference type="PANTHER" id="PTHR22988">
    <property type="entry name" value="MYOTONIC DYSTROPHY S/T KINASE-RELATED"/>
    <property type="match status" value="1"/>
</dbReference>
<dbReference type="PANTHER" id="PTHR22988:SF33">
    <property type="entry name" value="RHO-ASSOCIATED PROTEIN KINASE 1"/>
    <property type="match status" value="1"/>
</dbReference>
<dbReference type="Pfam" id="PF25346">
    <property type="entry name" value="PH_MRCK"/>
    <property type="match status" value="1"/>
</dbReference>
<dbReference type="Pfam" id="PF00069">
    <property type="entry name" value="Pkinase"/>
    <property type="match status" value="1"/>
</dbReference>
<dbReference type="Pfam" id="PF08912">
    <property type="entry name" value="Rho_Binding"/>
    <property type="match status" value="1"/>
</dbReference>
<dbReference type="PIRSF" id="PIRSF037568">
    <property type="entry name" value="Rho_kinase"/>
    <property type="match status" value="1"/>
</dbReference>
<dbReference type="SMART" id="SM00109">
    <property type="entry name" value="C1"/>
    <property type="match status" value="1"/>
</dbReference>
<dbReference type="SMART" id="SM00233">
    <property type="entry name" value="PH"/>
    <property type="match status" value="1"/>
</dbReference>
<dbReference type="SMART" id="SM00133">
    <property type="entry name" value="S_TK_X"/>
    <property type="match status" value="1"/>
</dbReference>
<dbReference type="SMART" id="SM00220">
    <property type="entry name" value="S_TKc"/>
    <property type="match status" value="1"/>
</dbReference>
<dbReference type="SUPFAM" id="SSF57889">
    <property type="entry name" value="Cysteine-rich domain"/>
    <property type="match status" value="1"/>
</dbReference>
<dbReference type="SUPFAM" id="SSF103652">
    <property type="entry name" value="G protein-binding domain"/>
    <property type="match status" value="1"/>
</dbReference>
<dbReference type="SUPFAM" id="SSF90257">
    <property type="entry name" value="Myosin rod fragments"/>
    <property type="match status" value="1"/>
</dbReference>
<dbReference type="SUPFAM" id="SSF50729">
    <property type="entry name" value="PH domain-like"/>
    <property type="match status" value="1"/>
</dbReference>
<dbReference type="SUPFAM" id="SSF56112">
    <property type="entry name" value="Protein kinase-like (PK-like)"/>
    <property type="match status" value="1"/>
</dbReference>
<dbReference type="PROSITE" id="PS51285">
    <property type="entry name" value="AGC_KINASE_CTER"/>
    <property type="match status" value="1"/>
</dbReference>
<dbReference type="PROSITE" id="PS50003">
    <property type="entry name" value="PH_DOMAIN"/>
    <property type="match status" value="1"/>
</dbReference>
<dbReference type="PROSITE" id="PS00107">
    <property type="entry name" value="PROTEIN_KINASE_ATP"/>
    <property type="match status" value="1"/>
</dbReference>
<dbReference type="PROSITE" id="PS50011">
    <property type="entry name" value="PROTEIN_KINASE_DOM"/>
    <property type="match status" value="1"/>
</dbReference>
<dbReference type="PROSITE" id="PS00108">
    <property type="entry name" value="PROTEIN_KINASE_ST"/>
    <property type="match status" value="1"/>
</dbReference>
<dbReference type="PROSITE" id="PS51860">
    <property type="entry name" value="REM_1"/>
    <property type="match status" value="1"/>
</dbReference>
<dbReference type="PROSITE" id="PS51859">
    <property type="entry name" value="RHO_BD"/>
    <property type="match status" value="1"/>
</dbReference>
<dbReference type="PROSITE" id="PS50081">
    <property type="entry name" value="ZF_DAG_PE_2"/>
    <property type="match status" value="1"/>
</dbReference>